<sequence length="105" mass="11536">MHIKKGDNVKVIAGKDKGKEGKVIATLPKKDRVVVEGVNIMKKHQKPTQLNPEGGILETEAAIHVSNVQLLDPKTNEPTRVGYKFVDGKKVRIAKKSGEEIKSNN</sequence>
<protein>
    <recommendedName>
        <fullName evidence="1">Large ribosomal subunit protein uL24</fullName>
    </recommendedName>
    <alternativeName>
        <fullName evidence="2">50S ribosomal protein L24</fullName>
    </alternativeName>
</protein>
<gene>
    <name evidence="1" type="primary">rplX</name>
    <name type="ordered locus">SAV2239</name>
</gene>
<keyword id="KW-0687">Ribonucleoprotein</keyword>
<keyword id="KW-0689">Ribosomal protein</keyword>
<keyword id="KW-0694">RNA-binding</keyword>
<keyword id="KW-0699">rRNA-binding</keyword>
<accession>P60734</accession>
<accession>Q99S32</accession>
<proteinExistence type="inferred from homology"/>
<organism>
    <name type="scientific">Staphylococcus aureus (strain Mu50 / ATCC 700699)</name>
    <dbReference type="NCBI Taxonomy" id="158878"/>
    <lineage>
        <taxon>Bacteria</taxon>
        <taxon>Bacillati</taxon>
        <taxon>Bacillota</taxon>
        <taxon>Bacilli</taxon>
        <taxon>Bacillales</taxon>
        <taxon>Staphylococcaceae</taxon>
        <taxon>Staphylococcus</taxon>
    </lineage>
</organism>
<name>RL24_STAAM</name>
<dbReference type="EMBL" id="BA000017">
    <property type="protein sequence ID" value="BAB58401.1"/>
    <property type="molecule type" value="Genomic_DNA"/>
</dbReference>
<dbReference type="RefSeq" id="WP_000547687.1">
    <property type="nucleotide sequence ID" value="NC_002758.2"/>
</dbReference>
<dbReference type="SMR" id="P60734"/>
<dbReference type="KEGG" id="sav:SAV2239"/>
<dbReference type="HOGENOM" id="CLU_093315_2_0_9"/>
<dbReference type="PhylomeDB" id="P60734"/>
<dbReference type="Proteomes" id="UP000002481">
    <property type="component" value="Chromosome"/>
</dbReference>
<dbReference type="GO" id="GO:1990904">
    <property type="term" value="C:ribonucleoprotein complex"/>
    <property type="evidence" value="ECO:0007669"/>
    <property type="project" value="UniProtKB-KW"/>
</dbReference>
<dbReference type="GO" id="GO:0005840">
    <property type="term" value="C:ribosome"/>
    <property type="evidence" value="ECO:0007669"/>
    <property type="project" value="UniProtKB-KW"/>
</dbReference>
<dbReference type="GO" id="GO:0019843">
    <property type="term" value="F:rRNA binding"/>
    <property type="evidence" value="ECO:0007669"/>
    <property type="project" value="UniProtKB-UniRule"/>
</dbReference>
<dbReference type="GO" id="GO:0003735">
    <property type="term" value="F:structural constituent of ribosome"/>
    <property type="evidence" value="ECO:0007669"/>
    <property type="project" value="InterPro"/>
</dbReference>
<dbReference type="GO" id="GO:0006412">
    <property type="term" value="P:translation"/>
    <property type="evidence" value="ECO:0007669"/>
    <property type="project" value="UniProtKB-UniRule"/>
</dbReference>
<dbReference type="CDD" id="cd06089">
    <property type="entry name" value="KOW_RPL26"/>
    <property type="match status" value="1"/>
</dbReference>
<dbReference type="FunFam" id="2.30.30.30:FF:000004">
    <property type="entry name" value="50S ribosomal protein L24"/>
    <property type="match status" value="1"/>
</dbReference>
<dbReference type="Gene3D" id="2.30.30.30">
    <property type="match status" value="1"/>
</dbReference>
<dbReference type="HAMAP" id="MF_01326_B">
    <property type="entry name" value="Ribosomal_uL24_B"/>
    <property type="match status" value="1"/>
</dbReference>
<dbReference type="InterPro" id="IPR005824">
    <property type="entry name" value="KOW"/>
</dbReference>
<dbReference type="InterPro" id="IPR014722">
    <property type="entry name" value="Rib_uL2_dom2"/>
</dbReference>
<dbReference type="InterPro" id="IPR003256">
    <property type="entry name" value="Ribosomal_uL24"/>
</dbReference>
<dbReference type="InterPro" id="IPR005825">
    <property type="entry name" value="Ribosomal_uL24_CS"/>
</dbReference>
<dbReference type="InterPro" id="IPR041988">
    <property type="entry name" value="Ribosomal_uL24_KOW"/>
</dbReference>
<dbReference type="InterPro" id="IPR008991">
    <property type="entry name" value="Translation_prot_SH3-like_sf"/>
</dbReference>
<dbReference type="NCBIfam" id="TIGR01079">
    <property type="entry name" value="rplX_bact"/>
    <property type="match status" value="1"/>
</dbReference>
<dbReference type="PANTHER" id="PTHR12903">
    <property type="entry name" value="MITOCHONDRIAL RIBOSOMAL PROTEIN L24"/>
    <property type="match status" value="1"/>
</dbReference>
<dbReference type="Pfam" id="PF00467">
    <property type="entry name" value="KOW"/>
    <property type="match status" value="1"/>
</dbReference>
<dbReference type="Pfam" id="PF17136">
    <property type="entry name" value="ribosomal_L24"/>
    <property type="match status" value="1"/>
</dbReference>
<dbReference type="SMART" id="SM00739">
    <property type="entry name" value="KOW"/>
    <property type="match status" value="1"/>
</dbReference>
<dbReference type="SUPFAM" id="SSF50104">
    <property type="entry name" value="Translation proteins SH3-like domain"/>
    <property type="match status" value="1"/>
</dbReference>
<dbReference type="PROSITE" id="PS01108">
    <property type="entry name" value="RIBOSOMAL_L24"/>
    <property type="match status" value="1"/>
</dbReference>
<comment type="function">
    <text evidence="1">One of two assembly initiator proteins, it binds directly to the 5'-end of the 23S rRNA, where it nucleates assembly of the 50S subunit.</text>
</comment>
<comment type="function">
    <text evidence="1">One of the proteins that surrounds the polypeptide exit tunnel on the outside of the subunit.</text>
</comment>
<comment type="subunit">
    <text evidence="1">Part of the 50S ribosomal subunit.</text>
</comment>
<comment type="similarity">
    <text evidence="1">Belongs to the universal ribosomal protein uL24 family.</text>
</comment>
<reference key="1">
    <citation type="journal article" date="2001" name="Lancet">
        <title>Whole genome sequencing of meticillin-resistant Staphylococcus aureus.</title>
        <authorList>
            <person name="Kuroda M."/>
            <person name="Ohta T."/>
            <person name="Uchiyama I."/>
            <person name="Baba T."/>
            <person name="Yuzawa H."/>
            <person name="Kobayashi I."/>
            <person name="Cui L."/>
            <person name="Oguchi A."/>
            <person name="Aoki K."/>
            <person name="Nagai Y."/>
            <person name="Lian J.-Q."/>
            <person name="Ito T."/>
            <person name="Kanamori M."/>
            <person name="Matsumaru H."/>
            <person name="Maruyama A."/>
            <person name="Murakami H."/>
            <person name="Hosoyama A."/>
            <person name="Mizutani-Ui Y."/>
            <person name="Takahashi N.K."/>
            <person name="Sawano T."/>
            <person name="Inoue R."/>
            <person name="Kaito C."/>
            <person name="Sekimizu K."/>
            <person name="Hirakawa H."/>
            <person name="Kuhara S."/>
            <person name="Goto S."/>
            <person name="Yabuzaki J."/>
            <person name="Kanehisa M."/>
            <person name="Yamashita A."/>
            <person name="Oshima K."/>
            <person name="Furuya K."/>
            <person name="Yoshino C."/>
            <person name="Shiba T."/>
            <person name="Hattori M."/>
            <person name="Ogasawara N."/>
            <person name="Hayashi H."/>
            <person name="Hiramatsu K."/>
        </authorList>
    </citation>
    <scope>NUCLEOTIDE SEQUENCE [LARGE SCALE GENOMIC DNA]</scope>
    <source>
        <strain>Mu50 / ATCC 700699</strain>
    </source>
</reference>
<evidence type="ECO:0000255" key="1">
    <source>
        <dbReference type="HAMAP-Rule" id="MF_01326"/>
    </source>
</evidence>
<evidence type="ECO:0000305" key="2"/>
<feature type="chain" id="PRO_0000130715" description="Large ribosomal subunit protein uL24">
    <location>
        <begin position="1"/>
        <end position="105"/>
    </location>
</feature>